<comment type="function">
    <text evidence="1">Bidirectionally degrades single-stranded DNA into large acid-insoluble oligonucleotides, which are then degraded further into small acid-soluble oligonucleotides.</text>
</comment>
<comment type="catalytic activity">
    <reaction evidence="1">
        <text>Exonucleolytic cleavage in either 5'- to 3'- or 3'- to 5'-direction to yield nucleoside 5'-phosphates.</text>
        <dbReference type="EC" id="3.1.11.6"/>
    </reaction>
</comment>
<comment type="subunit">
    <text evidence="1">Heterooligomer composed of large and small subunits.</text>
</comment>
<comment type="subcellular location">
    <subcellularLocation>
        <location evidence="1">Cytoplasm</location>
    </subcellularLocation>
</comment>
<comment type="similarity">
    <text evidence="1">Belongs to the XseB family.</text>
</comment>
<organism>
    <name type="scientific">Erwinia tasmaniensis (strain DSM 17950 / CFBP 7177 / CIP 109463 / NCPPB 4357 / Et1/99)</name>
    <dbReference type="NCBI Taxonomy" id="465817"/>
    <lineage>
        <taxon>Bacteria</taxon>
        <taxon>Pseudomonadati</taxon>
        <taxon>Pseudomonadota</taxon>
        <taxon>Gammaproteobacteria</taxon>
        <taxon>Enterobacterales</taxon>
        <taxon>Erwiniaceae</taxon>
        <taxon>Erwinia</taxon>
    </lineage>
</organism>
<name>EX7S_ERWT9</name>
<gene>
    <name evidence="1" type="primary">xseB</name>
    <name type="ordered locus">ETA_25250</name>
</gene>
<reference key="1">
    <citation type="journal article" date="2008" name="Environ. Microbiol.">
        <title>The genome of Erwinia tasmaniensis strain Et1/99, a non-pathogenic bacterium in the genus Erwinia.</title>
        <authorList>
            <person name="Kube M."/>
            <person name="Migdoll A.M."/>
            <person name="Mueller I."/>
            <person name="Kuhl H."/>
            <person name="Beck A."/>
            <person name="Reinhardt R."/>
            <person name="Geider K."/>
        </authorList>
    </citation>
    <scope>NUCLEOTIDE SEQUENCE [LARGE SCALE GENOMIC DNA]</scope>
    <source>
        <strain>DSM 17950 / CFBP 7177 / CIP 109463 / NCPPB 4357 / Et1/99</strain>
    </source>
</reference>
<dbReference type="EC" id="3.1.11.6" evidence="1"/>
<dbReference type="EMBL" id="CU468135">
    <property type="protein sequence ID" value="CAO97571.1"/>
    <property type="molecule type" value="Genomic_DNA"/>
</dbReference>
<dbReference type="RefSeq" id="WP_012442236.1">
    <property type="nucleotide sequence ID" value="NC_010694.1"/>
</dbReference>
<dbReference type="SMR" id="B2VHS1"/>
<dbReference type="STRING" id="465817.ETA_25250"/>
<dbReference type="KEGG" id="eta:ETA_25250"/>
<dbReference type="eggNOG" id="COG1722">
    <property type="taxonomic scope" value="Bacteria"/>
</dbReference>
<dbReference type="HOGENOM" id="CLU_145918_3_3_6"/>
<dbReference type="OrthoDB" id="5591562at2"/>
<dbReference type="Proteomes" id="UP000001726">
    <property type="component" value="Chromosome"/>
</dbReference>
<dbReference type="GO" id="GO:0005829">
    <property type="term" value="C:cytosol"/>
    <property type="evidence" value="ECO:0007669"/>
    <property type="project" value="TreeGrafter"/>
</dbReference>
<dbReference type="GO" id="GO:0009318">
    <property type="term" value="C:exodeoxyribonuclease VII complex"/>
    <property type="evidence" value="ECO:0007669"/>
    <property type="project" value="InterPro"/>
</dbReference>
<dbReference type="GO" id="GO:0008855">
    <property type="term" value="F:exodeoxyribonuclease VII activity"/>
    <property type="evidence" value="ECO:0007669"/>
    <property type="project" value="UniProtKB-UniRule"/>
</dbReference>
<dbReference type="GO" id="GO:0006308">
    <property type="term" value="P:DNA catabolic process"/>
    <property type="evidence" value="ECO:0007669"/>
    <property type="project" value="UniProtKB-UniRule"/>
</dbReference>
<dbReference type="FunFam" id="1.10.287.1040:FF:000001">
    <property type="entry name" value="Exodeoxyribonuclease 7 small subunit"/>
    <property type="match status" value="1"/>
</dbReference>
<dbReference type="Gene3D" id="1.10.287.1040">
    <property type="entry name" value="Exonuclease VII, small subunit"/>
    <property type="match status" value="1"/>
</dbReference>
<dbReference type="HAMAP" id="MF_00337">
    <property type="entry name" value="Exonuc_7_S"/>
    <property type="match status" value="1"/>
</dbReference>
<dbReference type="InterPro" id="IPR003761">
    <property type="entry name" value="Exonuc_VII_S"/>
</dbReference>
<dbReference type="InterPro" id="IPR037004">
    <property type="entry name" value="Exonuc_VII_ssu_sf"/>
</dbReference>
<dbReference type="NCBIfam" id="NF002137">
    <property type="entry name" value="PRK00977.1-1"/>
    <property type="match status" value="1"/>
</dbReference>
<dbReference type="NCBIfam" id="NF002140">
    <property type="entry name" value="PRK00977.1-4"/>
    <property type="match status" value="1"/>
</dbReference>
<dbReference type="NCBIfam" id="TIGR01280">
    <property type="entry name" value="xseB"/>
    <property type="match status" value="1"/>
</dbReference>
<dbReference type="PANTHER" id="PTHR34137">
    <property type="entry name" value="EXODEOXYRIBONUCLEASE 7 SMALL SUBUNIT"/>
    <property type="match status" value="1"/>
</dbReference>
<dbReference type="PANTHER" id="PTHR34137:SF1">
    <property type="entry name" value="EXODEOXYRIBONUCLEASE 7 SMALL SUBUNIT"/>
    <property type="match status" value="1"/>
</dbReference>
<dbReference type="Pfam" id="PF02609">
    <property type="entry name" value="Exonuc_VII_S"/>
    <property type="match status" value="1"/>
</dbReference>
<dbReference type="PIRSF" id="PIRSF006488">
    <property type="entry name" value="Exonuc_VII_S"/>
    <property type="match status" value="1"/>
</dbReference>
<dbReference type="SUPFAM" id="SSF116842">
    <property type="entry name" value="XseB-like"/>
    <property type="match status" value="1"/>
</dbReference>
<feature type="chain" id="PRO_1000119927" description="Exodeoxyribonuclease 7 small subunit">
    <location>
        <begin position="1"/>
        <end position="80"/>
    </location>
</feature>
<keyword id="KW-0963">Cytoplasm</keyword>
<keyword id="KW-0269">Exonuclease</keyword>
<keyword id="KW-0378">Hydrolase</keyword>
<keyword id="KW-0540">Nuclease</keyword>
<keyword id="KW-1185">Reference proteome</keyword>
<evidence type="ECO:0000255" key="1">
    <source>
        <dbReference type="HAMAP-Rule" id="MF_00337"/>
    </source>
</evidence>
<sequence>MPKKTQQSVSFEASLQQLEQIVSRLESGDLALEEALNEFERGVQLARAGQQVLQQAEQRVQILLSDDKNAELTPFTPEKE</sequence>
<protein>
    <recommendedName>
        <fullName evidence="1">Exodeoxyribonuclease 7 small subunit</fullName>
        <ecNumber evidence="1">3.1.11.6</ecNumber>
    </recommendedName>
    <alternativeName>
        <fullName evidence="1">Exodeoxyribonuclease VII small subunit</fullName>
        <shortName evidence="1">Exonuclease VII small subunit</shortName>
    </alternativeName>
</protein>
<accession>B2VHS1</accession>
<proteinExistence type="inferred from homology"/>